<dbReference type="EMBL" id="X74504">
    <property type="protein sequence ID" value="CAA52612.1"/>
    <property type="molecule type" value="mRNA"/>
</dbReference>
<dbReference type="EMBL" id="AK089239">
    <property type="protein sequence ID" value="BAC40808.1"/>
    <property type="molecule type" value="mRNA"/>
</dbReference>
<dbReference type="EMBL" id="AK133588">
    <property type="protein sequence ID" value="BAE21736.1"/>
    <property type="molecule type" value="mRNA"/>
</dbReference>
<dbReference type="EMBL" id="AK168595">
    <property type="protein sequence ID" value="BAE40462.1"/>
    <property type="molecule type" value="mRNA"/>
</dbReference>
<dbReference type="EMBL" id="AC084822">
    <property type="status" value="NOT_ANNOTATED_CDS"/>
    <property type="molecule type" value="Genomic_DNA"/>
</dbReference>
<dbReference type="CCDS" id="CCDS28019.1"/>
<dbReference type="PIR" id="I48783">
    <property type="entry name" value="S37488"/>
</dbReference>
<dbReference type="RefSeq" id="NP_001346037.1">
    <property type="nucleotide sequence ID" value="NM_001359108.1"/>
</dbReference>
<dbReference type="RefSeq" id="NP_001346038.1">
    <property type="nucleotide sequence ID" value="NM_001359109.1"/>
</dbReference>
<dbReference type="RefSeq" id="NP_613049.2">
    <property type="nucleotide sequence ID" value="NM_138583.2"/>
</dbReference>
<dbReference type="RefSeq" id="XP_006522290.1">
    <property type="nucleotide sequence ID" value="XM_006522227.2"/>
</dbReference>
<dbReference type="RefSeq" id="XP_006522291.1">
    <property type="nucleotide sequence ID" value="XM_006522228.1"/>
</dbReference>
<dbReference type="RefSeq" id="XP_011244231.1">
    <property type="nucleotide sequence ID" value="XM_011245929.1"/>
</dbReference>
<dbReference type="RefSeq" id="XP_017172519.1">
    <property type="nucleotide sequence ID" value="XM_017317030.1"/>
</dbReference>
<dbReference type="RefSeq" id="XP_017172520.1">
    <property type="nucleotide sequence ID" value="XM_017317031.3"/>
</dbReference>
<dbReference type="RefSeq" id="XP_036015871.1">
    <property type="nucleotide sequence ID" value="XM_036159978.1"/>
</dbReference>
<dbReference type="RefSeq" id="XP_036015872.1">
    <property type="nucleotide sequence ID" value="XM_036159979.1"/>
</dbReference>
<dbReference type="SMR" id="P54797"/>
<dbReference type="FunCoup" id="P54797">
    <property type="interactions" value="1813"/>
</dbReference>
<dbReference type="STRING" id="10090.ENSMUSP00000111291"/>
<dbReference type="GlyGen" id="P54797">
    <property type="glycosylation" value="1 site, 1 O-linked glycan (1 site)"/>
</dbReference>
<dbReference type="iPTMnet" id="P54797"/>
<dbReference type="PhosphoSitePlus" id="P54797"/>
<dbReference type="SwissPalm" id="P54797"/>
<dbReference type="jPOST" id="P54797"/>
<dbReference type="PaxDb" id="10090-ENSMUSP00000111291"/>
<dbReference type="ProteomicsDB" id="259476"/>
<dbReference type="ProteomicsDB" id="329089"/>
<dbReference type="Pumba" id="P54797"/>
<dbReference type="Antibodypedia" id="313">
    <property type="antibodies" value="96 antibodies from 16 providers"/>
</dbReference>
<dbReference type="DNASU" id="27883"/>
<dbReference type="Ensembl" id="ENSMUST00000115628.10">
    <property type="protein sequence ID" value="ENSMUSP00000111291.3"/>
    <property type="gene ID" value="ENSMUSG00000013539.15"/>
</dbReference>
<dbReference type="GeneID" id="27883"/>
<dbReference type="KEGG" id="mmu:27883"/>
<dbReference type="AGR" id="MGI:101825"/>
<dbReference type="CTD" id="128989"/>
<dbReference type="MGI" id="MGI:101825">
    <property type="gene designation" value="Tango2"/>
</dbReference>
<dbReference type="VEuPathDB" id="HostDB:ENSMUSG00000013539"/>
<dbReference type="eggNOG" id="KOG2342">
    <property type="taxonomic scope" value="Eukaryota"/>
</dbReference>
<dbReference type="GeneTree" id="ENSGT00390000012733"/>
<dbReference type="HOGENOM" id="CLU_047037_3_0_1"/>
<dbReference type="InParanoid" id="P54797"/>
<dbReference type="OMA" id="FAWRPGH"/>
<dbReference type="OrthoDB" id="191601at2759"/>
<dbReference type="TreeFam" id="TF315064"/>
<dbReference type="BioGRID-ORCS" id="27883">
    <property type="hits" value="2 hits in 78 CRISPR screens"/>
</dbReference>
<dbReference type="ChiTaRS" id="Tango2">
    <property type="organism name" value="mouse"/>
</dbReference>
<dbReference type="PRO" id="PR:P54797"/>
<dbReference type="Proteomes" id="UP000000589">
    <property type="component" value="Chromosome 16"/>
</dbReference>
<dbReference type="RNAct" id="P54797">
    <property type="molecule type" value="protein"/>
</dbReference>
<dbReference type="Bgee" id="ENSMUSG00000013539">
    <property type="expression patterns" value="Expressed in proximal tubule and 87 other cell types or tissues"/>
</dbReference>
<dbReference type="GO" id="GO:0005737">
    <property type="term" value="C:cytoplasm"/>
    <property type="evidence" value="ECO:0000250"/>
    <property type="project" value="UniProtKB"/>
</dbReference>
<dbReference type="GO" id="GO:0005829">
    <property type="term" value="C:cytosol"/>
    <property type="evidence" value="ECO:0000250"/>
    <property type="project" value="UniProtKB"/>
</dbReference>
<dbReference type="GO" id="GO:0005794">
    <property type="term" value="C:Golgi apparatus"/>
    <property type="evidence" value="ECO:0007669"/>
    <property type="project" value="UniProtKB-SubCell"/>
</dbReference>
<dbReference type="GO" id="GO:0005739">
    <property type="term" value="C:mitochondrion"/>
    <property type="evidence" value="ECO:0000314"/>
    <property type="project" value="MGI"/>
</dbReference>
<dbReference type="InterPro" id="IPR008551">
    <property type="entry name" value="TANGO2"/>
</dbReference>
<dbReference type="PANTHER" id="PTHR17985">
    <property type="entry name" value="SER/THR-RICH PROTEIN T10 IN DGCR REGION"/>
    <property type="match status" value="1"/>
</dbReference>
<dbReference type="PANTHER" id="PTHR17985:SF8">
    <property type="entry name" value="TRANSPORT AND GOLGI ORGANIZATION PROTEIN 2 HOMOLOG"/>
    <property type="match status" value="1"/>
</dbReference>
<dbReference type="Pfam" id="PF05742">
    <property type="entry name" value="TANGO2"/>
    <property type="match status" value="1"/>
</dbReference>
<proteinExistence type="evidence at protein level"/>
<keyword id="KW-0963">Cytoplasm</keyword>
<keyword id="KW-0333">Golgi apparatus</keyword>
<keyword id="KW-0496">Mitochondrion</keyword>
<keyword id="KW-1185">Reference proteome</keyword>
<comment type="function">
    <text evidence="1">May be involved in lipid homeostasis.</text>
</comment>
<comment type="subcellular location">
    <subcellularLocation>
        <location evidence="1">Cytoplasm</location>
    </subcellularLocation>
    <subcellularLocation>
        <location evidence="2">Mitochondrion</location>
    </subcellularLocation>
    <subcellularLocation>
        <location evidence="1">Golgi apparatus</location>
    </subcellularLocation>
</comment>
<comment type="tissue specificity">
    <text evidence="2 3">Expressed in fetal liver, lung, heart and kidney (PubMed:8268909). In brain, detected in the olfactory bulb, neocortex and cerebellum (PubMed:18775783). Elevated in mitral cells and minimally expressed in bulb interneurons (PubMed:18775783). In the cortex, restricted to the upper portion of layer 5 (PubMed:18775783). In the cerebellum, excluded from Purkinje cells but expressed in granule cells (PubMed:18775783).</text>
</comment>
<comment type="developmental stage">
    <text evidence="2 3">Levels increase during embryonic development, drop at postnatal day 0 and increase again during postnatal development, reaching a mmaxium at postnatal day 21 before dropping slightly at postnatal day 60 (PubMed:18775783). In 13 dpc embryos, expressed at high levels in the trachea, liver, esophagus, lung and velo-pharyngeal region (PubMed:8268909). Also detected in the central nervous system (PubMed:8268909).</text>
</comment>
<comment type="similarity">
    <text evidence="5">Belongs to the Tango2 family.</text>
</comment>
<comment type="caution">
    <text evidence="1 2">Previous published data showed conflicting results on the intracellular location of TANGO2. Has been reported to be located in the Golgi apparatus (By similarity). However, another study was unable to detect Golgi localization (By similarity). Has been reported to be located in the mitochondrion by several recent studies in mouse and human (PubMed:18775783). However, no mitochondrial localization was detected in another study which reported that the protein is primarily cytoplasmic (By similarity).</text>
</comment>
<reference key="1">
    <citation type="journal article" date="1993" name="Hum. Mol. Genet.">
        <title>Isolation of a gene expressed during early embryogenesis from the region of 22q11 commonly deleted in DiGeorge syndrome.</title>
        <authorList>
            <person name="Halford S."/>
            <person name="Wilson D.I."/>
            <person name="Daw S.C.M."/>
            <person name="Roberts C."/>
            <person name="Wadey R."/>
            <person name="Kamath S."/>
            <person name="Wickremasinghe A."/>
            <person name="Burn J."/>
            <person name="Goodship J."/>
            <person name="Mattei M.-G."/>
            <person name="Moormon A.F.M."/>
            <person name="Scambler P.J."/>
        </authorList>
    </citation>
    <scope>NUCLEOTIDE SEQUENCE [MRNA]</scope>
    <scope>TISSUE SPECIFICITY</scope>
    <scope>DEVELOPMENTAL STAGE</scope>
    <source>
        <strain>BALB/cJ</strain>
    </source>
</reference>
<reference key="2">
    <citation type="journal article" date="2008" name="Mol. Cell. Neurosci.">
        <title>Mitochondrial localization and function of a subset of 22q11 deletion syndrome candidate genes.</title>
        <authorList>
            <person name="Maynard T.M."/>
            <person name="Meechan D.W."/>
            <person name="Dudevoir M.L."/>
            <person name="Gopalakrishna D."/>
            <person name="Peters A.Z."/>
            <person name="Heindel C.C."/>
            <person name="Sugimoto T.J."/>
            <person name="Wu Y."/>
            <person name="Lieberman J.A."/>
            <person name="Lamantia A.S."/>
        </authorList>
    </citation>
    <scope>SUBCELLULAR LOCATION</scope>
    <scope>TISSUE SPECIFICITY</scope>
    <scope>DEVELOPMENTAL STAGE</scope>
</reference>
<reference key="3">
    <citation type="journal article" date="2005" name="Science">
        <title>The transcriptional landscape of the mammalian genome.</title>
        <authorList>
            <person name="Carninci P."/>
            <person name="Kasukawa T."/>
            <person name="Katayama S."/>
            <person name="Gough J."/>
            <person name="Frith M.C."/>
            <person name="Maeda N."/>
            <person name="Oyama R."/>
            <person name="Ravasi T."/>
            <person name="Lenhard B."/>
            <person name="Wells C."/>
            <person name="Kodzius R."/>
            <person name="Shimokawa K."/>
            <person name="Bajic V.B."/>
            <person name="Brenner S.E."/>
            <person name="Batalov S."/>
            <person name="Forrest A.R."/>
            <person name="Zavolan M."/>
            <person name="Davis M.J."/>
            <person name="Wilming L.G."/>
            <person name="Aidinis V."/>
            <person name="Allen J.E."/>
            <person name="Ambesi-Impiombato A."/>
            <person name="Apweiler R."/>
            <person name="Aturaliya R.N."/>
            <person name="Bailey T.L."/>
            <person name="Bansal M."/>
            <person name="Baxter L."/>
            <person name="Beisel K.W."/>
            <person name="Bersano T."/>
            <person name="Bono H."/>
            <person name="Chalk A.M."/>
            <person name="Chiu K.P."/>
            <person name="Choudhary V."/>
            <person name="Christoffels A."/>
            <person name="Clutterbuck D.R."/>
            <person name="Crowe M.L."/>
            <person name="Dalla E."/>
            <person name="Dalrymple B.P."/>
            <person name="de Bono B."/>
            <person name="Della Gatta G."/>
            <person name="di Bernardo D."/>
            <person name="Down T."/>
            <person name="Engstrom P."/>
            <person name="Fagiolini M."/>
            <person name="Faulkner G."/>
            <person name="Fletcher C.F."/>
            <person name="Fukushima T."/>
            <person name="Furuno M."/>
            <person name="Futaki S."/>
            <person name="Gariboldi M."/>
            <person name="Georgii-Hemming P."/>
            <person name="Gingeras T.R."/>
            <person name="Gojobori T."/>
            <person name="Green R.E."/>
            <person name="Gustincich S."/>
            <person name="Harbers M."/>
            <person name="Hayashi Y."/>
            <person name="Hensch T.K."/>
            <person name="Hirokawa N."/>
            <person name="Hill D."/>
            <person name="Huminiecki L."/>
            <person name="Iacono M."/>
            <person name="Ikeo K."/>
            <person name="Iwama A."/>
            <person name="Ishikawa T."/>
            <person name="Jakt M."/>
            <person name="Kanapin A."/>
            <person name="Katoh M."/>
            <person name="Kawasawa Y."/>
            <person name="Kelso J."/>
            <person name="Kitamura H."/>
            <person name="Kitano H."/>
            <person name="Kollias G."/>
            <person name="Krishnan S.P."/>
            <person name="Kruger A."/>
            <person name="Kummerfeld S.K."/>
            <person name="Kurochkin I.V."/>
            <person name="Lareau L.F."/>
            <person name="Lazarevic D."/>
            <person name="Lipovich L."/>
            <person name="Liu J."/>
            <person name="Liuni S."/>
            <person name="McWilliam S."/>
            <person name="Madan Babu M."/>
            <person name="Madera M."/>
            <person name="Marchionni L."/>
            <person name="Matsuda H."/>
            <person name="Matsuzawa S."/>
            <person name="Miki H."/>
            <person name="Mignone F."/>
            <person name="Miyake S."/>
            <person name="Morris K."/>
            <person name="Mottagui-Tabar S."/>
            <person name="Mulder N."/>
            <person name="Nakano N."/>
            <person name="Nakauchi H."/>
            <person name="Ng P."/>
            <person name="Nilsson R."/>
            <person name="Nishiguchi S."/>
            <person name="Nishikawa S."/>
            <person name="Nori F."/>
            <person name="Ohara O."/>
            <person name="Okazaki Y."/>
            <person name="Orlando V."/>
            <person name="Pang K.C."/>
            <person name="Pavan W.J."/>
            <person name="Pavesi G."/>
            <person name="Pesole G."/>
            <person name="Petrovsky N."/>
            <person name="Piazza S."/>
            <person name="Reed J."/>
            <person name="Reid J.F."/>
            <person name="Ring B.Z."/>
            <person name="Ringwald M."/>
            <person name="Rost B."/>
            <person name="Ruan Y."/>
            <person name="Salzberg S.L."/>
            <person name="Sandelin A."/>
            <person name="Schneider C."/>
            <person name="Schoenbach C."/>
            <person name="Sekiguchi K."/>
            <person name="Semple C.A."/>
            <person name="Seno S."/>
            <person name="Sessa L."/>
            <person name="Sheng Y."/>
            <person name="Shibata Y."/>
            <person name="Shimada H."/>
            <person name="Shimada K."/>
            <person name="Silva D."/>
            <person name="Sinclair B."/>
            <person name="Sperling S."/>
            <person name="Stupka E."/>
            <person name="Sugiura K."/>
            <person name="Sultana R."/>
            <person name="Takenaka Y."/>
            <person name="Taki K."/>
            <person name="Tammoja K."/>
            <person name="Tan S.L."/>
            <person name="Tang S."/>
            <person name="Taylor M.S."/>
            <person name="Tegner J."/>
            <person name="Teichmann S.A."/>
            <person name="Ueda H.R."/>
            <person name="van Nimwegen E."/>
            <person name="Verardo R."/>
            <person name="Wei C.L."/>
            <person name="Yagi K."/>
            <person name="Yamanishi H."/>
            <person name="Zabarovsky E."/>
            <person name="Zhu S."/>
            <person name="Zimmer A."/>
            <person name="Hide W."/>
            <person name="Bult C."/>
            <person name="Grimmond S.M."/>
            <person name="Teasdale R.D."/>
            <person name="Liu E.T."/>
            <person name="Brusic V."/>
            <person name="Quackenbush J."/>
            <person name="Wahlestedt C."/>
            <person name="Mattick J.S."/>
            <person name="Hume D.A."/>
            <person name="Kai C."/>
            <person name="Sasaki D."/>
            <person name="Tomaru Y."/>
            <person name="Fukuda S."/>
            <person name="Kanamori-Katayama M."/>
            <person name="Suzuki M."/>
            <person name="Aoki J."/>
            <person name="Arakawa T."/>
            <person name="Iida J."/>
            <person name="Imamura K."/>
            <person name="Itoh M."/>
            <person name="Kato T."/>
            <person name="Kawaji H."/>
            <person name="Kawagashira N."/>
            <person name="Kawashima T."/>
            <person name="Kojima M."/>
            <person name="Kondo S."/>
            <person name="Konno H."/>
            <person name="Nakano K."/>
            <person name="Ninomiya N."/>
            <person name="Nishio T."/>
            <person name="Okada M."/>
            <person name="Plessy C."/>
            <person name="Shibata K."/>
            <person name="Shiraki T."/>
            <person name="Suzuki S."/>
            <person name="Tagami M."/>
            <person name="Waki K."/>
            <person name="Watahiki A."/>
            <person name="Okamura-Oho Y."/>
            <person name="Suzuki H."/>
            <person name="Kawai J."/>
            <person name="Hayashizaki Y."/>
        </authorList>
    </citation>
    <scope>NUCLEOTIDE SEQUENCE [LARGE SCALE MRNA]</scope>
</reference>
<reference key="4">
    <citation type="journal article" date="2009" name="PLoS Biol.">
        <title>Lineage-specific biology revealed by a finished genome assembly of the mouse.</title>
        <authorList>
            <person name="Church D.M."/>
            <person name="Goodstadt L."/>
            <person name="Hillier L.W."/>
            <person name="Zody M.C."/>
            <person name="Goldstein S."/>
            <person name="She X."/>
            <person name="Bult C.J."/>
            <person name="Agarwala R."/>
            <person name="Cherry J.L."/>
            <person name="DiCuccio M."/>
            <person name="Hlavina W."/>
            <person name="Kapustin Y."/>
            <person name="Meric P."/>
            <person name="Maglott D."/>
            <person name="Birtle Z."/>
            <person name="Marques A.C."/>
            <person name="Graves T."/>
            <person name="Zhou S."/>
            <person name="Teague B."/>
            <person name="Potamousis K."/>
            <person name="Churas C."/>
            <person name="Place M."/>
            <person name="Herschleb J."/>
            <person name="Runnheim R."/>
            <person name="Forrest D."/>
            <person name="Amos-Landgraf J."/>
            <person name="Schwartz D.C."/>
            <person name="Cheng Z."/>
            <person name="Lindblad-Toh K."/>
            <person name="Eichler E.E."/>
            <person name="Ponting C.P."/>
        </authorList>
    </citation>
    <scope>NUCLEOTIDE SEQUENCE [LARGE SCALE GENOMIC DNA]</scope>
    <source>
        <strain>C57BL/6J</strain>
    </source>
</reference>
<reference key="5">
    <citation type="journal article" date="2010" name="Cell">
        <title>A tissue-specific atlas of mouse protein phosphorylation and expression.</title>
        <authorList>
            <person name="Huttlin E.L."/>
            <person name="Jedrychowski M.P."/>
            <person name="Elias J.E."/>
            <person name="Goswami T."/>
            <person name="Rad R."/>
            <person name="Beausoleil S.A."/>
            <person name="Villen J."/>
            <person name="Haas W."/>
            <person name="Sowa M.E."/>
            <person name="Gygi S.P."/>
        </authorList>
    </citation>
    <scope>IDENTIFICATION BY MASS SPECTROMETRY [LARGE SCALE ANALYSIS]</scope>
    <source>
        <tissue>Brain</tissue>
        <tissue>Heart</tissue>
        <tissue>Kidney</tissue>
        <tissue>Liver</tissue>
        <tissue>Spleen</tissue>
        <tissue>Testis</tissue>
    </source>
</reference>
<protein>
    <recommendedName>
        <fullName>Transport and Golgi organization 2 homolog</fullName>
    </recommendedName>
    <alternativeName>
        <fullName>Ser/Thr-rich protein T10 in DGCR region</fullName>
    </alternativeName>
</protein>
<feature type="chain" id="PRO_0000072396" description="Transport and Golgi organization 2 homolog">
    <location>
        <begin position="1"/>
        <end position="276"/>
    </location>
</feature>
<feature type="sequence conflict" description="In Ref. 1; CAA52612." evidence="5" ref="1">
    <original>CVRCAT</original>
    <variation>WCRCAS</variation>
    <location>
        <begin position="228"/>
        <end position="233"/>
    </location>
</feature>
<accession>P54797</accession>
<accession>Q8BTN3</accession>
<sequence>MCIIFFKFDPRPVSKNAYRLILAANRDEFYNRPSKLADFWGNNSEILSGLDMEEGKAGGTWLGISTRGKLGALTNYLQPRQEPDARGRGELVSHFLTSDMDSLSYLKKVSTEGHLYNGFNIIAADLSTSKGDVVCYYGNRGEPEPIVLTPGTYGLSNALLETPWKKLCFGKQLFMEAVEQSEALPKDVLVTQLLDVLNNEEAQLPDPAIEDQGQEYVQPILNKYAAVCVRCATYGTRTNTIILVDANGHVTFTERSMLDKDTSRWETNTYEFTLQS</sequence>
<name>TNG2_MOUSE</name>
<evidence type="ECO:0000250" key="1">
    <source>
        <dbReference type="UniProtKB" id="Q6ICL3"/>
    </source>
</evidence>
<evidence type="ECO:0000269" key="2">
    <source>
    </source>
</evidence>
<evidence type="ECO:0000269" key="3">
    <source>
    </source>
</evidence>
<evidence type="ECO:0000303" key="4">
    <source>
    </source>
</evidence>
<evidence type="ECO:0000305" key="5"/>
<organism>
    <name type="scientific">Mus musculus</name>
    <name type="common">Mouse</name>
    <dbReference type="NCBI Taxonomy" id="10090"/>
    <lineage>
        <taxon>Eukaryota</taxon>
        <taxon>Metazoa</taxon>
        <taxon>Chordata</taxon>
        <taxon>Craniata</taxon>
        <taxon>Vertebrata</taxon>
        <taxon>Euteleostomi</taxon>
        <taxon>Mammalia</taxon>
        <taxon>Eutheria</taxon>
        <taxon>Euarchontoglires</taxon>
        <taxon>Glires</taxon>
        <taxon>Rodentia</taxon>
        <taxon>Myomorpha</taxon>
        <taxon>Muroidea</taxon>
        <taxon>Muridae</taxon>
        <taxon>Murinae</taxon>
        <taxon>Mus</taxon>
        <taxon>Mus</taxon>
    </lineage>
</organism>
<gene>
    <name type="primary">Tango2</name>
    <name type="synonym">D16H22S680E</name>
    <name evidence="4" type="synonym">T10</name>
</gene>